<evidence type="ECO:0000255" key="1">
    <source>
        <dbReference type="HAMAP-Rule" id="MF_01569"/>
    </source>
</evidence>
<gene>
    <name evidence="1" type="primary">proS</name>
    <name type="ordered locus">YPA_0545</name>
</gene>
<name>SYP_YERPA</name>
<protein>
    <recommendedName>
        <fullName evidence="1">Proline--tRNA ligase</fullName>
        <ecNumber evidence="1">6.1.1.15</ecNumber>
    </recommendedName>
    <alternativeName>
        <fullName evidence="1">Prolyl-tRNA synthetase</fullName>
        <shortName evidence="1">ProRS</shortName>
    </alternativeName>
</protein>
<feature type="chain" id="PRO_0000288391" description="Proline--tRNA ligase">
    <location>
        <begin position="1"/>
        <end position="572"/>
    </location>
</feature>
<accession>Q1CAK9</accession>
<keyword id="KW-0030">Aminoacyl-tRNA synthetase</keyword>
<keyword id="KW-0067">ATP-binding</keyword>
<keyword id="KW-0963">Cytoplasm</keyword>
<keyword id="KW-0436">Ligase</keyword>
<keyword id="KW-0547">Nucleotide-binding</keyword>
<keyword id="KW-0648">Protein biosynthesis</keyword>
<proteinExistence type="inferred from homology"/>
<sequence>MRTSQYLLSTQKETPADAEVISHQLMLRAGMIRKLASGLYTWLPTGVRVLKKVENIVREEMNNAGAIEVSMPVVQPADLWQESGRWEQYGPELLRFVDRGERPFVLGPTHEEVITDLIRGEINSYKQLPLNFFQIQTKFRDEVRPRFGVMRAREFLMKDAYSFHTTQESLQETYDAMYTAYSKIFSRMDLNFRAVLADTGSIGGSASHEFQVLAESGEDDIVFSTGSDYAANIEFAEALAPTEPRAPATEELRIVDTPNAKTIAELVEQFKLPIEKTVKTLLVHAHEESGHKLVALLVRGDHDLNEIKAEKLPQVAKPLTFASEEEIRAAIGAGPGSLGPVNLSLPVIADHSVAVMSDFGAGANIDGKHYFGINWERDLALPLVADLRNVVEGDISPDGKGTLQIKRGIEVGHIFQLGTKYSEVMKATVQGEDGRNQVMTMGCYGIGVSRVVAAAIEQNHDDRGIIWPDAIAPFQVAILPMNMHKSFRVKELAEELYTTLRSHGIDVILDDRKERPGVMFADMELIGVPHNIVIGDRNLDSEEVEYKNRRVGEKQMIKTSEIVEFLLSQIKR</sequence>
<organism>
    <name type="scientific">Yersinia pestis bv. Antiqua (strain Antiqua)</name>
    <dbReference type="NCBI Taxonomy" id="360102"/>
    <lineage>
        <taxon>Bacteria</taxon>
        <taxon>Pseudomonadati</taxon>
        <taxon>Pseudomonadota</taxon>
        <taxon>Gammaproteobacteria</taxon>
        <taxon>Enterobacterales</taxon>
        <taxon>Yersiniaceae</taxon>
        <taxon>Yersinia</taxon>
    </lineage>
</organism>
<dbReference type="EC" id="6.1.1.15" evidence="1"/>
<dbReference type="EMBL" id="CP000308">
    <property type="protein sequence ID" value="ABG12513.1"/>
    <property type="molecule type" value="Genomic_DNA"/>
</dbReference>
<dbReference type="RefSeq" id="WP_002212156.1">
    <property type="nucleotide sequence ID" value="NZ_CP009906.1"/>
</dbReference>
<dbReference type="SMR" id="Q1CAK9"/>
<dbReference type="GeneID" id="57977492"/>
<dbReference type="KEGG" id="ypa:YPA_0545"/>
<dbReference type="Proteomes" id="UP000001971">
    <property type="component" value="Chromosome"/>
</dbReference>
<dbReference type="GO" id="GO:0005829">
    <property type="term" value="C:cytosol"/>
    <property type="evidence" value="ECO:0007669"/>
    <property type="project" value="TreeGrafter"/>
</dbReference>
<dbReference type="GO" id="GO:0002161">
    <property type="term" value="F:aminoacyl-tRNA deacylase activity"/>
    <property type="evidence" value="ECO:0007669"/>
    <property type="project" value="InterPro"/>
</dbReference>
<dbReference type="GO" id="GO:0005524">
    <property type="term" value="F:ATP binding"/>
    <property type="evidence" value="ECO:0007669"/>
    <property type="project" value="UniProtKB-UniRule"/>
</dbReference>
<dbReference type="GO" id="GO:0004827">
    <property type="term" value="F:proline-tRNA ligase activity"/>
    <property type="evidence" value="ECO:0007669"/>
    <property type="project" value="UniProtKB-UniRule"/>
</dbReference>
<dbReference type="GO" id="GO:0006433">
    <property type="term" value="P:prolyl-tRNA aminoacylation"/>
    <property type="evidence" value="ECO:0007669"/>
    <property type="project" value="UniProtKB-UniRule"/>
</dbReference>
<dbReference type="CDD" id="cd04334">
    <property type="entry name" value="ProRS-INS"/>
    <property type="match status" value="1"/>
</dbReference>
<dbReference type="CDD" id="cd00861">
    <property type="entry name" value="ProRS_anticodon_short"/>
    <property type="match status" value="1"/>
</dbReference>
<dbReference type="CDD" id="cd00779">
    <property type="entry name" value="ProRS_core_prok"/>
    <property type="match status" value="1"/>
</dbReference>
<dbReference type="FunFam" id="3.30.930.10:FF:000012">
    <property type="entry name" value="Proline--tRNA ligase"/>
    <property type="match status" value="1"/>
</dbReference>
<dbReference type="FunFam" id="3.30.930.10:FF:000097">
    <property type="entry name" value="Proline--tRNA ligase"/>
    <property type="match status" value="1"/>
</dbReference>
<dbReference type="FunFam" id="3.40.50.800:FF:000006">
    <property type="entry name" value="Proline--tRNA ligase"/>
    <property type="match status" value="1"/>
</dbReference>
<dbReference type="FunFam" id="3.90.960.10:FF:000001">
    <property type="entry name" value="Proline--tRNA ligase"/>
    <property type="match status" value="1"/>
</dbReference>
<dbReference type="Gene3D" id="3.40.50.800">
    <property type="entry name" value="Anticodon-binding domain"/>
    <property type="match status" value="1"/>
</dbReference>
<dbReference type="Gene3D" id="3.30.930.10">
    <property type="entry name" value="Bira Bifunctional Protein, Domain 2"/>
    <property type="match status" value="2"/>
</dbReference>
<dbReference type="Gene3D" id="3.90.960.10">
    <property type="entry name" value="YbaK/aminoacyl-tRNA synthetase-associated domain"/>
    <property type="match status" value="1"/>
</dbReference>
<dbReference type="HAMAP" id="MF_01569">
    <property type="entry name" value="Pro_tRNA_synth_type1"/>
    <property type="match status" value="1"/>
</dbReference>
<dbReference type="InterPro" id="IPR002314">
    <property type="entry name" value="aa-tRNA-synt_IIb"/>
</dbReference>
<dbReference type="InterPro" id="IPR006195">
    <property type="entry name" value="aa-tRNA-synth_II"/>
</dbReference>
<dbReference type="InterPro" id="IPR045864">
    <property type="entry name" value="aa-tRNA-synth_II/BPL/LPL"/>
</dbReference>
<dbReference type="InterPro" id="IPR004154">
    <property type="entry name" value="Anticodon-bd"/>
</dbReference>
<dbReference type="InterPro" id="IPR036621">
    <property type="entry name" value="Anticodon-bd_dom_sf"/>
</dbReference>
<dbReference type="InterPro" id="IPR002316">
    <property type="entry name" value="Pro-tRNA-ligase_IIa"/>
</dbReference>
<dbReference type="InterPro" id="IPR004500">
    <property type="entry name" value="Pro-tRNA-synth_IIa_bac-type"/>
</dbReference>
<dbReference type="InterPro" id="IPR023717">
    <property type="entry name" value="Pro-tRNA-Synthase_IIa_type1"/>
</dbReference>
<dbReference type="InterPro" id="IPR050062">
    <property type="entry name" value="Pro-tRNA_synthetase"/>
</dbReference>
<dbReference type="InterPro" id="IPR044140">
    <property type="entry name" value="ProRS_anticodon_short"/>
</dbReference>
<dbReference type="InterPro" id="IPR033730">
    <property type="entry name" value="ProRS_core_prok"/>
</dbReference>
<dbReference type="InterPro" id="IPR036754">
    <property type="entry name" value="YbaK/aa-tRNA-synt-asso_dom_sf"/>
</dbReference>
<dbReference type="InterPro" id="IPR007214">
    <property type="entry name" value="YbaK/aa-tRNA-synth-assoc-dom"/>
</dbReference>
<dbReference type="NCBIfam" id="NF006625">
    <property type="entry name" value="PRK09194.1"/>
    <property type="match status" value="1"/>
</dbReference>
<dbReference type="NCBIfam" id="TIGR00409">
    <property type="entry name" value="proS_fam_II"/>
    <property type="match status" value="1"/>
</dbReference>
<dbReference type="PANTHER" id="PTHR42753">
    <property type="entry name" value="MITOCHONDRIAL RIBOSOME PROTEIN L39/PROLYL-TRNA LIGASE FAMILY MEMBER"/>
    <property type="match status" value="1"/>
</dbReference>
<dbReference type="PANTHER" id="PTHR42753:SF2">
    <property type="entry name" value="PROLINE--TRNA LIGASE"/>
    <property type="match status" value="1"/>
</dbReference>
<dbReference type="Pfam" id="PF03129">
    <property type="entry name" value="HGTP_anticodon"/>
    <property type="match status" value="1"/>
</dbReference>
<dbReference type="Pfam" id="PF00587">
    <property type="entry name" value="tRNA-synt_2b"/>
    <property type="match status" value="1"/>
</dbReference>
<dbReference type="Pfam" id="PF04073">
    <property type="entry name" value="tRNA_edit"/>
    <property type="match status" value="1"/>
</dbReference>
<dbReference type="PIRSF" id="PIRSF001535">
    <property type="entry name" value="ProRS_1"/>
    <property type="match status" value="1"/>
</dbReference>
<dbReference type="PRINTS" id="PR01046">
    <property type="entry name" value="TRNASYNTHPRO"/>
</dbReference>
<dbReference type="SUPFAM" id="SSF52954">
    <property type="entry name" value="Class II aaRS ABD-related"/>
    <property type="match status" value="1"/>
</dbReference>
<dbReference type="SUPFAM" id="SSF55681">
    <property type="entry name" value="Class II aaRS and biotin synthetases"/>
    <property type="match status" value="1"/>
</dbReference>
<dbReference type="SUPFAM" id="SSF55826">
    <property type="entry name" value="YbaK/ProRS associated domain"/>
    <property type="match status" value="1"/>
</dbReference>
<dbReference type="PROSITE" id="PS50862">
    <property type="entry name" value="AA_TRNA_LIGASE_II"/>
    <property type="match status" value="1"/>
</dbReference>
<comment type="function">
    <text evidence="1">Catalyzes the attachment of proline to tRNA(Pro) in a two-step reaction: proline is first activated by ATP to form Pro-AMP and then transferred to the acceptor end of tRNA(Pro). As ProRS can inadvertently accommodate and process non-cognate amino acids such as alanine and cysteine, to avoid such errors it has two additional distinct editing activities against alanine. One activity is designated as 'pretransfer' editing and involves the tRNA(Pro)-independent hydrolysis of activated Ala-AMP. The other activity is designated 'posttransfer' editing and involves deacylation of mischarged Ala-tRNA(Pro). The misacylated Cys-tRNA(Pro) is not edited by ProRS.</text>
</comment>
<comment type="catalytic activity">
    <reaction evidence="1">
        <text>tRNA(Pro) + L-proline + ATP = L-prolyl-tRNA(Pro) + AMP + diphosphate</text>
        <dbReference type="Rhea" id="RHEA:14305"/>
        <dbReference type="Rhea" id="RHEA-COMP:9700"/>
        <dbReference type="Rhea" id="RHEA-COMP:9702"/>
        <dbReference type="ChEBI" id="CHEBI:30616"/>
        <dbReference type="ChEBI" id="CHEBI:33019"/>
        <dbReference type="ChEBI" id="CHEBI:60039"/>
        <dbReference type="ChEBI" id="CHEBI:78442"/>
        <dbReference type="ChEBI" id="CHEBI:78532"/>
        <dbReference type="ChEBI" id="CHEBI:456215"/>
        <dbReference type="EC" id="6.1.1.15"/>
    </reaction>
</comment>
<comment type="subunit">
    <text evidence="1">Homodimer.</text>
</comment>
<comment type="subcellular location">
    <subcellularLocation>
        <location evidence="1">Cytoplasm</location>
    </subcellularLocation>
</comment>
<comment type="domain">
    <text evidence="1">Consists of three domains: the N-terminal catalytic domain, the editing domain and the C-terminal anticodon-binding domain.</text>
</comment>
<comment type="similarity">
    <text evidence="1">Belongs to the class-II aminoacyl-tRNA synthetase family. ProS type 1 subfamily.</text>
</comment>
<reference key="1">
    <citation type="journal article" date="2006" name="J. Bacteriol.">
        <title>Complete genome sequence of Yersinia pestis strains Antiqua and Nepal516: evidence of gene reduction in an emerging pathogen.</title>
        <authorList>
            <person name="Chain P.S.G."/>
            <person name="Hu P."/>
            <person name="Malfatti S.A."/>
            <person name="Radnedge L."/>
            <person name="Larimer F."/>
            <person name="Vergez L.M."/>
            <person name="Worsham P."/>
            <person name="Chu M.C."/>
            <person name="Andersen G.L."/>
        </authorList>
    </citation>
    <scope>NUCLEOTIDE SEQUENCE [LARGE SCALE GENOMIC DNA]</scope>
    <source>
        <strain>Antiqua</strain>
    </source>
</reference>